<name>PUR8_CAEBR</name>
<evidence type="ECO:0000250" key="1"/>
<evidence type="ECO:0000305" key="2"/>
<evidence type="ECO:0000312" key="3">
    <source>
        <dbReference type="WormBase" id="CBG21917"/>
    </source>
</evidence>
<sequence length="478" mass="53680">MAAEDKFESVLSTRYCKNSPLVSILSETNKATLWRQLWIWLGEAEKELGLKQVTQEAIDEMKSQRDNFDWSFIRAEERKLKHDVMAHNHAFGKICPTAAGIIHLGATSCYVQDNADLIAYRDSIDHILKRFATVIDRLAQFSLNNKEVVTVGRTHYQTASLVTVGKRGVLWAQELLMAFQSLAEFRDKMRFRGIKGATGTQDSFLTLFSGDEEKVEALDELVTKKANFANRFLITGQTYSRQQDSQLVFSLSLLGAAAKKVCTDIRVLQAFGELLEPFEKDQIGSSAMPYKKNPMKSERCCALARKLINAPQEALTILADQGLERTLDDSAGRRMLIPDVLLTAEALLTTLQNIFEGLTVQTDNVKKIVEDEIAFLGLEKAMMMLTEEGVDRQQAHAVIRKTALEAKQLQATQKVDIRQTMADPFFDSVRDRIVGLVNNPINFTGRCVSQTENFIAKELKPTISKYLDQSAAKVQLDV</sequence>
<feature type="chain" id="PRO_0000137896" description="Adenylosuccinate lyase">
    <location>
        <begin position="1"/>
        <end position="478"/>
    </location>
</feature>
<feature type="active site" description="Proton donor/acceptor" evidence="1">
    <location>
        <position position="155"/>
    </location>
</feature>
<feature type="active site" description="Proton donor/acceptor" evidence="1">
    <location>
        <position position="285"/>
    </location>
</feature>
<feature type="binding site" evidence="1">
    <location>
        <begin position="14"/>
        <end position="15"/>
    </location>
    <ligand>
        <name>substrate</name>
        <note>ligand shared between two neighboring subunits</note>
    </ligand>
</feature>
<feature type="binding site" description="in other chain" evidence="1">
    <location>
        <begin position="81"/>
        <end position="83"/>
    </location>
    <ligand>
        <name>substrate</name>
        <note>ligand shared between two neighboring subunits</note>
    </ligand>
</feature>
<feature type="binding site" description="in other chain" evidence="1">
    <location>
        <begin position="107"/>
        <end position="108"/>
    </location>
    <ligand>
        <name>substrate</name>
        <note>ligand shared between two neighboring subunits</note>
    </ligand>
</feature>
<feature type="binding site" description="in other chain" evidence="1">
    <location>
        <position position="237"/>
    </location>
    <ligand>
        <name>substrate</name>
        <note>ligand shared between two neighboring subunits</note>
    </ligand>
</feature>
<feature type="binding site" evidence="1">
    <location>
        <position position="299"/>
    </location>
    <ligand>
        <name>substrate</name>
        <note>ligand shared between two neighboring subunits</note>
    </ligand>
</feature>
<feature type="binding site" description="in other chain" evidence="1">
    <location>
        <position position="325"/>
    </location>
    <ligand>
        <name>substrate</name>
        <note>ligand shared between two neighboring subunits</note>
    </ligand>
</feature>
<feature type="binding site" description="in other chain" evidence="1">
    <location>
        <position position="330"/>
    </location>
    <ligand>
        <name>substrate</name>
        <note>ligand shared between two neighboring subunits</note>
    </ligand>
</feature>
<feature type="binding site" description="in other chain" evidence="1">
    <location>
        <position position="334"/>
    </location>
    <ligand>
        <name>substrate</name>
        <note>ligand shared between two neighboring subunits</note>
    </ligand>
</feature>
<accession>Q60Q90</accession>
<accession>A8Y184</accession>
<organism>
    <name type="scientific">Caenorhabditis briggsae</name>
    <dbReference type="NCBI Taxonomy" id="6238"/>
    <lineage>
        <taxon>Eukaryota</taxon>
        <taxon>Metazoa</taxon>
        <taxon>Ecdysozoa</taxon>
        <taxon>Nematoda</taxon>
        <taxon>Chromadorea</taxon>
        <taxon>Rhabditida</taxon>
        <taxon>Rhabditina</taxon>
        <taxon>Rhabditomorpha</taxon>
        <taxon>Rhabditoidea</taxon>
        <taxon>Rhabditidae</taxon>
        <taxon>Peloderinae</taxon>
        <taxon>Caenorhabditis</taxon>
    </lineage>
</organism>
<keyword id="KW-0456">Lyase</keyword>
<keyword id="KW-0658">Purine biosynthesis</keyword>
<keyword id="KW-1185">Reference proteome</keyword>
<comment type="function">
    <text evidence="1">Catalyzes two non-sequential steps in de novo AMP synthesis: converts (S)-2-(5-amino-1-(5-phospho-D-ribosyl)imidazole-4-carboxamido)succinate (SAICAR) to fumarate plus 5-amino-1-(5-phospho-D-ribosyl)imidazole-4-carboxamide, and thereby also contributes to de novo IMP synthesis, and converts succinyladenosine monophosphate (SAMP) to AMP and fumarate.</text>
</comment>
<comment type="catalytic activity">
    <reaction>
        <text>N(6)-(1,2-dicarboxyethyl)-AMP = fumarate + AMP</text>
        <dbReference type="Rhea" id="RHEA:16853"/>
        <dbReference type="ChEBI" id="CHEBI:29806"/>
        <dbReference type="ChEBI" id="CHEBI:57567"/>
        <dbReference type="ChEBI" id="CHEBI:456215"/>
        <dbReference type="EC" id="4.3.2.2"/>
    </reaction>
</comment>
<comment type="catalytic activity">
    <reaction>
        <text>(2S)-2-[5-amino-1-(5-phospho-beta-D-ribosyl)imidazole-4-carboxamido]succinate = 5-amino-1-(5-phospho-beta-D-ribosyl)imidazole-4-carboxamide + fumarate</text>
        <dbReference type="Rhea" id="RHEA:23920"/>
        <dbReference type="ChEBI" id="CHEBI:29806"/>
        <dbReference type="ChEBI" id="CHEBI:58443"/>
        <dbReference type="ChEBI" id="CHEBI:58475"/>
        <dbReference type="EC" id="4.3.2.2"/>
    </reaction>
</comment>
<comment type="pathway">
    <text>Purine metabolism; AMP biosynthesis via de novo pathway; AMP from IMP: step 2/2.</text>
</comment>
<comment type="pathway">
    <text>Purine metabolism; IMP biosynthesis via de novo pathway; 5-amino-1-(5-phospho-D-ribosyl)imidazole-4-carboxamide from 5-amino-1-(5-phospho-D-ribosyl)imidazole-4-carboxylate: step 2/2.</text>
</comment>
<comment type="subunit">
    <text evidence="1">Homotetramer. Residues from neighboring subunits contribute catalytic and substrate-binding residues to each active site (By similarity).</text>
</comment>
<comment type="similarity">
    <text evidence="2">Belongs to the lyase 1 family. Adenylosuccinate lyase subfamily.</text>
</comment>
<reference key="1">
    <citation type="journal article" date="2003" name="PLoS Biol.">
        <title>The genome sequence of Caenorhabditis briggsae: a platform for comparative genomics.</title>
        <authorList>
            <person name="Stein L.D."/>
            <person name="Bao Z."/>
            <person name="Blasiar D."/>
            <person name="Blumenthal T."/>
            <person name="Brent M.R."/>
            <person name="Chen N."/>
            <person name="Chinwalla A."/>
            <person name="Clarke L."/>
            <person name="Clee C."/>
            <person name="Coghlan A."/>
            <person name="Coulson A."/>
            <person name="D'Eustachio P."/>
            <person name="Fitch D.H.A."/>
            <person name="Fulton L.A."/>
            <person name="Fulton R.E."/>
            <person name="Griffiths-Jones S."/>
            <person name="Harris T.W."/>
            <person name="Hillier L.W."/>
            <person name="Kamath R."/>
            <person name="Kuwabara P.E."/>
            <person name="Mardis E.R."/>
            <person name="Marra M.A."/>
            <person name="Miner T.L."/>
            <person name="Minx P."/>
            <person name="Mullikin J.C."/>
            <person name="Plumb R.W."/>
            <person name="Rogers J."/>
            <person name="Schein J.E."/>
            <person name="Sohrmann M."/>
            <person name="Spieth J."/>
            <person name="Stajich J.E."/>
            <person name="Wei C."/>
            <person name="Willey D."/>
            <person name="Wilson R.K."/>
            <person name="Durbin R.M."/>
            <person name="Waterston R.H."/>
        </authorList>
    </citation>
    <scope>NUCLEOTIDE SEQUENCE [LARGE SCALE GENOMIC DNA]</scope>
    <source>
        <strain>AF16</strain>
    </source>
</reference>
<protein>
    <recommendedName>
        <fullName>Adenylosuccinate lyase</fullName>
        <shortName>ASL</shortName>
        <ecNumber>4.3.2.2</ecNumber>
    </recommendedName>
    <alternativeName>
        <fullName>Adenylosuccinase</fullName>
        <shortName>ASase</shortName>
    </alternativeName>
</protein>
<proteinExistence type="inferred from homology"/>
<gene>
    <name evidence="3" type="primary">adsl-1</name>
    <name evidence="3" type="ORF">CBG21917</name>
</gene>
<dbReference type="EC" id="4.3.2.2"/>
<dbReference type="EMBL" id="HE600952">
    <property type="protein sequence ID" value="CAP38645.3"/>
    <property type="molecule type" value="Genomic_DNA"/>
</dbReference>
<dbReference type="RefSeq" id="XP_002629880.1">
    <property type="nucleotide sequence ID" value="XM_002629834.1"/>
</dbReference>
<dbReference type="SMR" id="Q60Q90"/>
<dbReference type="FunCoup" id="Q60Q90">
    <property type="interactions" value="2505"/>
</dbReference>
<dbReference type="STRING" id="6238.Q60Q90"/>
<dbReference type="EnsemblMetazoa" id="CBG21917.1">
    <property type="protein sequence ID" value="CBG21917.1"/>
    <property type="gene ID" value="WBGene00040586"/>
</dbReference>
<dbReference type="GeneID" id="8573056"/>
<dbReference type="KEGG" id="cbr:CBG_21917"/>
<dbReference type="CTD" id="8573056"/>
<dbReference type="WormBase" id="CBG21917">
    <property type="protein sequence ID" value="CBP05203"/>
    <property type="gene ID" value="WBGene00040586"/>
    <property type="gene designation" value="Cbr-adsl-1"/>
</dbReference>
<dbReference type="eggNOG" id="KOG2700">
    <property type="taxonomic scope" value="Eukaryota"/>
</dbReference>
<dbReference type="HOGENOM" id="CLU_030949_1_1_1"/>
<dbReference type="InParanoid" id="Q60Q90"/>
<dbReference type="OMA" id="VQENAMK"/>
<dbReference type="OrthoDB" id="406045at2759"/>
<dbReference type="UniPathway" id="UPA00074">
    <property type="reaction ID" value="UER00132"/>
</dbReference>
<dbReference type="UniPathway" id="UPA00075">
    <property type="reaction ID" value="UER00336"/>
</dbReference>
<dbReference type="Proteomes" id="UP000008549">
    <property type="component" value="Unassembled WGS sequence"/>
</dbReference>
<dbReference type="GO" id="GO:0005829">
    <property type="term" value="C:cytosol"/>
    <property type="evidence" value="ECO:0000318"/>
    <property type="project" value="GO_Central"/>
</dbReference>
<dbReference type="GO" id="GO:0070626">
    <property type="term" value="F:(S)-2-(5-amino-1-(5-phospho-D-ribosyl)imidazole-4-carboxamido) succinate lyase (fumarate-forming) activity"/>
    <property type="evidence" value="ECO:0000318"/>
    <property type="project" value="GO_Central"/>
</dbReference>
<dbReference type="GO" id="GO:0004018">
    <property type="term" value="F:N6-(1,2-dicarboxyethyl)AMP AMP-lyase (fumarate-forming) activity"/>
    <property type="evidence" value="ECO:0000318"/>
    <property type="project" value="GO_Central"/>
</dbReference>
<dbReference type="GO" id="GO:0044208">
    <property type="term" value="P:'de novo' AMP biosynthetic process"/>
    <property type="evidence" value="ECO:0000318"/>
    <property type="project" value="GO_Central"/>
</dbReference>
<dbReference type="GO" id="GO:0006189">
    <property type="term" value="P:'de novo' IMP biosynthetic process"/>
    <property type="evidence" value="ECO:0007669"/>
    <property type="project" value="UniProtKB-UniPathway"/>
</dbReference>
<dbReference type="CDD" id="cd03302">
    <property type="entry name" value="Adenylsuccinate_lyase_2"/>
    <property type="match status" value="1"/>
</dbReference>
<dbReference type="FunFam" id="1.10.275.60:FF:000001">
    <property type="entry name" value="Adenylosuccinate lyase"/>
    <property type="match status" value="1"/>
</dbReference>
<dbReference type="FunFam" id="1.10.40.30:FF:000015">
    <property type="entry name" value="Adenylosuccinate lyase"/>
    <property type="match status" value="1"/>
</dbReference>
<dbReference type="Gene3D" id="1.10.275.60">
    <property type="match status" value="1"/>
</dbReference>
<dbReference type="Gene3D" id="1.10.40.30">
    <property type="entry name" value="Fumarase/aspartase (C-terminal domain)"/>
    <property type="match status" value="1"/>
</dbReference>
<dbReference type="Gene3D" id="1.20.200.10">
    <property type="entry name" value="Fumarase/aspartase (Central domain)"/>
    <property type="match status" value="1"/>
</dbReference>
<dbReference type="InterPro" id="IPR019468">
    <property type="entry name" value="AdenyloSucc_lyase_C"/>
</dbReference>
<dbReference type="InterPro" id="IPR020557">
    <property type="entry name" value="Fumarate_lyase_CS"/>
</dbReference>
<dbReference type="InterPro" id="IPR000362">
    <property type="entry name" value="Fumarate_lyase_fam"/>
</dbReference>
<dbReference type="InterPro" id="IPR022761">
    <property type="entry name" value="Fumarate_lyase_N"/>
</dbReference>
<dbReference type="InterPro" id="IPR008948">
    <property type="entry name" value="L-Aspartase-like"/>
</dbReference>
<dbReference type="PANTHER" id="PTHR43172">
    <property type="entry name" value="ADENYLOSUCCINATE LYASE"/>
    <property type="match status" value="1"/>
</dbReference>
<dbReference type="PANTHER" id="PTHR43172:SF1">
    <property type="entry name" value="ADENYLOSUCCINATE LYASE"/>
    <property type="match status" value="1"/>
</dbReference>
<dbReference type="Pfam" id="PF00206">
    <property type="entry name" value="Lyase_1"/>
    <property type="match status" value="1"/>
</dbReference>
<dbReference type="PRINTS" id="PR00149">
    <property type="entry name" value="FUMRATELYASE"/>
</dbReference>
<dbReference type="SMART" id="SM00998">
    <property type="entry name" value="ADSL_C"/>
    <property type="match status" value="1"/>
</dbReference>
<dbReference type="SUPFAM" id="SSF48557">
    <property type="entry name" value="L-aspartase-like"/>
    <property type="match status" value="1"/>
</dbReference>
<dbReference type="PROSITE" id="PS00163">
    <property type="entry name" value="FUMARATE_LYASES"/>
    <property type="match status" value="1"/>
</dbReference>